<keyword id="KW-0328">Glycosyltransferase</keyword>
<keyword id="KW-0460">Magnesium</keyword>
<keyword id="KW-0665">Pyrimidine biosynthesis</keyword>
<keyword id="KW-0808">Transferase</keyword>
<accession>A6VED8</accession>
<reference key="1">
    <citation type="submission" date="2007-06" db="EMBL/GenBank/DDBJ databases">
        <authorList>
            <person name="Dodson R.J."/>
            <person name="Harkins D."/>
            <person name="Paulsen I.T."/>
        </authorList>
    </citation>
    <scope>NUCLEOTIDE SEQUENCE [LARGE SCALE GENOMIC DNA]</scope>
    <source>
        <strain>DSM 24068 / PA7</strain>
    </source>
</reference>
<dbReference type="EC" id="2.4.2.10" evidence="1"/>
<dbReference type="EMBL" id="CP000744">
    <property type="protein sequence ID" value="ABR85190.1"/>
    <property type="molecule type" value="Genomic_DNA"/>
</dbReference>
<dbReference type="RefSeq" id="WP_012077941.1">
    <property type="nucleotide sequence ID" value="NC_009656.1"/>
</dbReference>
<dbReference type="SMR" id="A6VED8"/>
<dbReference type="GeneID" id="77223862"/>
<dbReference type="KEGG" id="pap:PSPA7_6107"/>
<dbReference type="HOGENOM" id="CLU_074878_0_1_6"/>
<dbReference type="UniPathway" id="UPA00070">
    <property type="reaction ID" value="UER00119"/>
</dbReference>
<dbReference type="Proteomes" id="UP000001582">
    <property type="component" value="Chromosome"/>
</dbReference>
<dbReference type="GO" id="GO:0005737">
    <property type="term" value="C:cytoplasm"/>
    <property type="evidence" value="ECO:0007669"/>
    <property type="project" value="TreeGrafter"/>
</dbReference>
<dbReference type="GO" id="GO:0000287">
    <property type="term" value="F:magnesium ion binding"/>
    <property type="evidence" value="ECO:0007669"/>
    <property type="project" value="UniProtKB-UniRule"/>
</dbReference>
<dbReference type="GO" id="GO:0004588">
    <property type="term" value="F:orotate phosphoribosyltransferase activity"/>
    <property type="evidence" value="ECO:0007669"/>
    <property type="project" value="UniProtKB-UniRule"/>
</dbReference>
<dbReference type="GO" id="GO:0006207">
    <property type="term" value="P:'de novo' pyrimidine nucleobase biosynthetic process"/>
    <property type="evidence" value="ECO:0007669"/>
    <property type="project" value="TreeGrafter"/>
</dbReference>
<dbReference type="GO" id="GO:0044205">
    <property type="term" value="P:'de novo' UMP biosynthetic process"/>
    <property type="evidence" value="ECO:0007669"/>
    <property type="project" value="UniProtKB-UniRule"/>
</dbReference>
<dbReference type="GO" id="GO:0046132">
    <property type="term" value="P:pyrimidine ribonucleoside biosynthetic process"/>
    <property type="evidence" value="ECO:0007669"/>
    <property type="project" value="TreeGrafter"/>
</dbReference>
<dbReference type="CDD" id="cd06223">
    <property type="entry name" value="PRTases_typeI"/>
    <property type="match status" value="1"/>
</dbReference>
<dbReference type="FunFam" id="3.40.50.2020:FF:000008">
    <property type="entry name" value="Orotate phosphoribosyltransferase"/>
    <property type="match status" value="1"/>
</dbReference>
<dbReference type="Gene3D" id="3.40.50.2020">
    <property type="match status" value="1"/>
</dbReference>
<dbReference type="HAMAP" id="MF_01208">
    <property type="entry name" value="PyrE"/>
    <property type="match status" value="1"/>
</dbReference>
<dbReference type="InterPro" id="IPR023031">
    <property type="entry name" value="OPRT"/>
</dbReference>
<dbReference type="InterPro" id="IPR004467">
    <property type="entry name" value="Or_phspho_trans_dom"/>
</dbReference>
<dbReference type="InterPro" id="IPR000836">
    <property type="entry name" value="PRibTrfase_dom"/>
</dbReference>
<dbReference type="InterPro" id="IPR029057">
    <property type="entry name" value="PRTase-like"/>
</dbReference>
<dbReference type="NCBIfam" id="TIGR00336">
    <property type="entry name" value="pyrE"/>
    <property type="match status" value="1"/>
</dbReference>
<dbReference type="PANTHER" id="PTHR46683">
    <property type="entry name" value="OROTATE PHOSPHORIBOSYLTRANSFERASE 1-RELATED"/>
    <property type="match status" value="1"/>
</dbReference>
<dbReference type="PANTHER" id="PTHR46683:SF1">
    <property type="entry name" value="OROTATE PHOSPHORIBOSYLTRANSFERASE 1-RELATED"/>
    <property type="match status" value="1"/>
</dbReference>
<dbReference type="Pfam" id="PF00156">
    <property type="entry name" value="Pribosyltran"/>
    <property type="match status" value="1"/>
</dbReference>
<dbReference type="SUPFAM" id="SSF53271">
    <property type="entry name" value="PRTase-like"/>
    <property type="match status" value="1"/>
</dbReference>
<dbReference type="PROSITE" id="PS00103">
    <property type="entry name" value="PUR_PYR_PR_TRANSFER"/>
    <property type="match status" value="1"/>
</dbReference>
<sequence length="213" mass="23277">MQAYQRDFIRFAIERGVLRFGEFTLKSGRTSPYFFNAGLFDSGLALARLGRFYAEAVIDSGIDFDVLFGPAYKGIPLAATTAVALAEQHRRDLPWCFNRKEAKDHGEGGTLVGAPLSGRVLIIDDVITAGTAIREVMQIIDAQGARAAGVLIALNRQERGKGELSAIQEVERDFGMPVVSIVSLEQVLEYLAGDAELKKHLPAVEAYRAQYGI</sequence>
<organism>
    <name type="scientific">Pseudomonas paraeruginosa (strain DSM 24068 / PA7)</name>
    <name type="common">Pseudomonas aeruginosa (strain PA7)</name>
    <dbReference type="NCBI Taxonomy" id="381754"/>
    <lineage>
        <taxon>Bacteria</taxon>
        <taxon>Pseudomonadati</taxon>
        <taxon>Pseudomonadota</taxon>
        <taxon>Gammaproteobacteria</taxon>
        <taxon>Pseudomonadales</taxon>
        <taxon>Pseudomonadaceae</taxon>
        <taxon>Pseudomonas</taxon>
        <taxon>Pseudomonas paraeruginosa</taxon>
    </lineage>
</organism>
<protein>
    <recommendedName>
        <fullName evidence="1">Orotate phosphoribosyltransferase</fullName>
        <shortName evidence="1">OPRT</shortName>
        <shortName evidence="1">OPRTase</shortName>
        <ecNumber evidence="1">2.4.2.10</ecNumber>
    </recommendedName>
</protein>
<gene>
    <name evidence="1" type="primary">pyrE</name>
    <name type="ordered locus">PSPA7_6107</name>
</gene>
<proteinExistence type="inferred from homology"/>
<name>PYRE_PSEP7</name>
<evidence type="ECO:0000255" key="1">
    <source>
        <dbReference type="HAMAP-Rule" id="MF_01208"/>
    </source>
</evidence>
<comment type="function">
    <text evidence="1">Catalyzes the transfer of a ribosyl phosphate group from 5-phosphoribose 1-diphosphate to orotate, leading to the formation of orotidine monophosphate (OMP).</text>
</comment>
<comment type="catalytic activity">
    <reaction evidence="1">
        <text>orotidine 5'-phosphate + diphosphate = orotate + 5-phospho-alpha-D-ribose 1-diphosphate</text>
        <dbReference type="Rhea" id="RHEA:10380"/>
        <dbReference type="ChEBI" id="CHEBI:30839"/>
        <dbReference type="ChEBI" id="CHEBI:33019"/>
        <dbReference type="ChEBI" id="CHEBI:57538"/>
        <dbReference type="ChEBI" id="CHEBI:58017"/>
        <dbReference type="EC" id="2.4.2.10"/>
    </reaction>
</comment>
<comment type="cofactor">
    <cofactor evidence="1">
        <name>Mg(2+)</name>
        <dbReference type="ChEBI" id="CHEBI:18420"/>
    </cofactor>
</comment>
<comment type="pathway">
    <text evidence="1">Pyrimidine metabolism; UMP biosynthesis via de novo pathway; UMP from orotate: step 1/2.</text>
</comment>
<comment type="subunit">
    <text evidence="1">Homodimer.</text>
</comment>
<comment type="similarity">
    <text evidence="1">Belongs to the purine/pyrimidine phosphoribosyltransferase family. PyrE subfamily.</text>
</comment>
<feature type="chain" id="PRO_1000066271" description="Orotate phosphoribosyltransferase">
    <location>
        <begin position="1"/>
        <end position="213"/>
    </location>
</feature>
<feature type="binding site" description="in other chain" evidence="1">
    <location>
        <position position="26"/>
    </location>
    <ligand>
        <name>5-phospho-alpha-D-ribose 1-diphosphate</name>
        <dbReference type="ChEBI" id="CHEBI:58017"/>
        <note>ligand shared between dimeric partners</note>
    </ligand>
</feature>
<feature type="binding site" evidence="1">
    <location>
        <begin position="34"/>
        <end position="35"/>
    </location>
    <ligand>
        <name>orotate</name>
        <dbReference type="ChEBI" id="CHEBI:30839"/>
    </ligand>
</feature>
<feature type="binding site" description="in other chain" evidence="1">
    <location>
        <begin position="72"/>
        <end position="73"/>
    </location>
    <ligand>
        <name>5-phospho-alpha-D-ribose 1-diphosphate</name>
        <dbReference type="ChEBI" id="CHEBI:58017"/>
        <note>ligand shared between dimeric partners</note>
    </ligand>
</feature>
<feature type="binding site" evidence="1">
    <location>
        <position position="99"/>
    </location>
    <ligand>
        <name>5-phospho-alpha-D-ribose 1-diphosphate</name>
        <dbReference type="ChEBI" id="CHEBI:58017"/>
        <note>ligand shared between dimeric partners</note>
    </ligand>
</feature>
<feature type="binding site" description="in other chain" evidence="1">
    <location>
        <position position="100"/>
    </location>
    <ligand>
        <name>5-phospho-alpha-D-ribose 1-diphosphate</name>
        <dbReference type="ChEBI" id="CHEBI:58017"/>
        <note>ligand shared between dimeric partners</note>
    </ligand>
</feature>
<feature type="binding site" evidence="1">
    <location>
        <position position="103"/>
    </location>
    <ligand>
        <name>5-phospho-alpha-D-ribose 1-diphosphate</name>
        <dbReference type="ChEBI" id="CHEBI:58017"/>
        <note>ligand shared between dimeric partners</note>
    </ligand>
</feature>
<feature type="binding site" evidence="1">
    <location>
        <position position="105"/>
    </location>
    <ligand>
        <name>5-phospho-alpha-D-ribose 1-diphosphate</name>
        <dbReference type="ChEBI" id="CHEBI:58017"/>
        <note>ligand shared between dimeric partners</note>
    </ligand>
</feature>
<feature type="binding site" description="in other chain" evidence="1">
    <location>
        <begin position="124"/>
        <end position="132"/>
    </location>
    <ligand>
        <name>5-phospho-alpha-D-ribose 1-diphosphate</name>
        <dbReference type="ChEBI" id="CHEBI:58017"/>
        <note>ligand shared between dimeric partners</note>
    </ligand>
</feature>
<feature type="binding site" evidence="1">
    <location>
        <position position="128"/>
    </location>
    <ligand>
        <name>orotate</name>
        <dbReference type="ChEBI" id="CHEBI:30839"/>
    </ligand>
</feature>
<feature type="binding site" evidence="1">
    <location>
        <position position="156"/>
    </location>
    <ligand>
        <name>orotate</name>
        <dbReference type="ChEBI" id="CHEBI:30839"/>
    </ligand>
</feature>